<reference key="1">
    <citation type="journal article" date="1985" name="J. Bacteriol.">
        <title>Comparison of the regulatory regions of ilvGEDA operons from several enteric organisms.</title>
        <authorList>
            <person name="Harms E."/>
            <person name="Hsu J.-H."/>
            <person name="Subrahmanyam C.S."/>
            <person name="Umbarger H.E."/>
        </authorList>
    </citation>
    <scope>NUCLEOTIDE SEQUENCE [GENOMIC DNA]</scope>
</reference>
<gene>
    <name type="primary">ilvL</name>
</gene>
<dbReference type="EMBL" id="M11655">
    <property type="protein sequence ID" value="AAA26559.1"/>
    <property type="status" value="ALT_SEQ"/>
    <property type="molecule type" value="Genomic_DNA"/>
</dbReference>
<dbReference type="STRING" id="273526.SMDB11_3985A"/>
<dbReference type="GO" id="GO:0008652">
    <property type="term" value="P:amino acid biosynthetic process"/>
    <property type="evidence" value="ECO:0007669"/>
    <property type="project" value="UniProtKB-KW"/>
</dbReference>
<dbReference type="GO" id="GO:0009082">
    <property type="term" value="P:branched-chain amino acid biosynthetic process"/>
    <property type="evidence" value="ECO:0007669"/>
    <property type="project" value="UniProtKB-KW"/>
</dbReference>
<dbReference type="InterPro" id="IPR012567">
    <property type="entry name" value="IlvGEDA_leader"/>
</dbReference>
<dbReference type="NCBIfam" id="NF007744">
    <property type="entry name" value="PRK10424.1"/>
    <property type="match status" value="1"/>
</dbReference>
<dbReference type="Pfam" id="PF08046">
    <property type="entry name" value="IlvGEDA_leader"/>
    <property type="match status" value="1"/>
</dbReference>
<protein>
    <recommendedName>
        <fullName>ilv operon leader peptide</fullName>
    </recommendedName>
    <alternativeName>
        <fullName>ilvGMEDA operon attenuator peptide</fullName>
    </alternativeName>
</protein>
<keyword id="KW-0028">Amino-acid biosynthesis</keyword>
<keyword id="KW-0100">Branched-chain amino acid biosynthesis</keyword>
<keyword id="KW-0428">Leader peptide</keyword>
<accession>P62528</accession>
<accession>P03060</accession>
<proteinExistence type="predicted"/>
<feature type="peptide" id="PRO_0000044758" description="ilv operon leader peptide">
    <location>
        <begin position="1"/>
        <end position="32"/>
    </location>
</feature>
<sequence>MTALLRVISLVVISVVVIIIPPCGAALGRGKA</sequence>
<organism>
    <name type="scientific">Serratia marcescens</name>
    <dbReference type="NCBI Taxonomy" id="615"/>
    <lineage>
        <taxon>Bacteria</taxon>
        <taxon>Pseudomonadati</taxon>
        <taxon>Pseudomonadota</taxon>
        <taxon>Gammaproteobacteria</taxon>
        <taxon>Enterobacterales</taxon>
        <taxon>Yersiniaceae</taxon>
        <taxon>Serratia</taxon>
    </lineage>
</organism>
<name>LPID_SERMA</name>